<comment type="function">
    <text evidence="1 7 8 9">Transcriptional regulator which may play a role in the differentiation and maintenance of meso-diencephalic dopaminergic (mdDA) neurons (By similarity). Required for lens and retinal development and for pituitary pre-placode formation and cell specification.</text>
</comment>
<comment type="subcellular location">
    <subcellularLocation>
        <location evidence="2 4 5">Nucleus</location>
    </subcellularLocation>
</comment>
<comment type="tissue specificity">
    <text evidence="7 8 9">In the adult, high levels detected in the eye and much lower levels in internal organs such as liver, gastrointestinal system, heart, genitourinary system and pancreas.</text>
</comment>
<comment type="developmental stage">
    <text evidence="7 8 9">Expressed throughout development with low levels detected from 3-8 hpf and highest levels in developing brain and lens at 24 hpf. In the embryo, expressed in anterior neural plate and later in lens and pituitary cells. Detected in the forebrain, lens and pectoral fin buds at 24 hpf. Becomes restricted to the lens equatorial region by 48 hpf. Strongest expression detected in the diencephalon and pituitary at 48 hpf. Evident in the cartilage surrounding the mouth at 72 hpf, appearing in the iris of the eye, developing lower jaw and the branchial arches at 96 hpf and extending to developing musculature along the trunk. During lens development, exhibits widespread expression during the primary differentiation phase of lens formation and then restricted to the region of secondary fiber cell differentiation during the phase of lens growth. Expressed in both proliferating and early differentiating progenitor cells of the posterior tuberculum.</text>
</comment>
<comment type="similarity">
    <text evidence="3">Belongs to the paired homeobox family. Bicoid subfamily.</text>
</comment>
<organism>
    <name type="scientific">Danio rerio</name>
    <name type="common">Zebrafish</name>
    <name type="synonym">Brachydanio rerio</name>
    <dbReference type="NCBI Taxonomy" id="7955"/>
    <lineage>
        <taxon>Eukaryota</taxon>
        <taxon>Metazoa</taxon>
        <taxon>Chordata</taxon>
        <taxon>Craniata</taxon>
        <taxon>Vertebrata</taxon>
        <taxon>Euteleostomi</taxon>
        <taxon>Actinopterygii</taxon>
        <taxon>Neopterygii</taxon>
        <taxon>Teleostei</taxon>
        <taxon>Ostariophysi</taxon>
        <taxon>Cypriniformes</taxon>
        <taxon>Danionidae</taxon>
        <taxon>Danioninae</taxon>
        <taxon>Danio</taxon>
    </lineage>
</organism>
<protein>
    <recommendedName>
        <fullName evidence="2">Pituitary homeobox 3</fullName>
    </recommendedName>
    <alternativeName>
        <fullName evidence="13">Bicoid-like homeodomain transcription factor Pitx3</fullName>
    </alternativeName>
    <alternativeName>
        <fullName>Homeobox protein PITX3</fullName>
    </alternativeName>
    <alternativeName>
        <fullName evidence="12">Paired-like homeodomain transcription factor 3</fullName>
    </alternativeName>
</protein>
<feature type="chain" id="PRO_0000407846" description="Pituitary homeobox 3">
    <location>
        <begin position="1"/>
        <end position="293"/>
    </location>
</feature>
<feature type="DNA-binding region" description="Homeobox" evidence="4">
    <location>
        <begin position="60"/>
        <end position="119"/>
    </location>
</feature>
<feature type="region of interest" description="Disordered" evidence="6">
    <location>
        <begin position="1"/>
        <end position="69"/>
    </location>
</feature>
<feature type="short sequence motif" description="OAR" evidence="5">
    <location>
        <begin position="255"/>
        <end position="268"/>
    </location>
</feature>
<feature type="short sequence motif" description="Nuclear localization signal" evidence="2">
    <location>
        <begin position="260"/>
        <end position="264"/>
    </location>
</feature>
<feature type="compositionally biased region" description="Basic and acidic residues" evidence="6">
    <location>
        <begin position="37"/>
        <end position="48"/>
    </location>
</feature>
<feature type="sequence conflict" description="In Ref. 2; AAT68296." evidence="10" ref="2">
    <original>F</original>
    <variation>V</variation>
    <location>
        <position position="108"/>
    </location>
</feature>
<feature type="sequence conflict" description="In Ref. 2; AAT68296." evidence="10" ref="2">
    <original>R</original>
    <variation>L</variation>
    <location>
        <position position="118"/>
    </location>
</feature>
<feature type="sequence conflict" description="In Ref. 2; AAT68296." evidence="10" ref="2">
    <original>F</original>
    <variation>Y</variation>
    <location>
        <position position="169"/>
    </location>
</feature>
<feature type="sequence conflict" description="In Ref. 2; AAT68296." evidence="10" ref="2">
    <original>P</original>
    <variation>A</variation>
    <location>
        <position position="189"/>
    </location>
</feature>
<feature type="sequence conflict" description="In Ref. 2; AAT68296." evidence="10" ref="2">
    <original>S</original>
    <variation>L</variation>
    <location>
        <position position="204"/>
    </location>
</feature>
<feature type="sequence conflict" description="In Ref. 2; AAT68296." evidence="10" ref="2">
    <original>N</original>
    <variation>S</variation>
    <location>
        <position position="221"/>
    </location>
</feature>
<feature type="sequence conflict" description="In Ref. 2; AAT68296." evidence="10" ref="2">
    <original>N</original>
    <variation>D</variation>
    <location>
        <position position="224"/>
    </location>
</feature>
<dbReference type="EMBL" id="AY525643">
    <property type="protein sequence ID" value="AAR98874.1"/>
    <property type="molecule type" value="mRNA"/>
</dbReference>
<dbReference type="EMBL" id="AY639155">
    <property type="protein sequence ID" value="AAT72155.1"/>
    <property type="molecule type" value="mRNA"/>
</dbReference>
<dbReference type="EMBL" id="AY643793">
    <property type="protein sequence ID" value="AAT68296.1"/>
    <property type="molecule type" value="Genomic_DNA"/>
</dbReference>
<dbReference type="EMBL" id="CR626878">
    <property type="protein sequence ID" value="CAX12174.1"/>
    <property type="molecule type" value="Genomic_DNA"/>
</dbReference>
<dbReference type="EMBL" id="BC094961">
    <property type="protein sequence ID" value="AAH94961.1"/>
    <property type="molecule type" value="mRNA"/>
</dbReference>
<dbReference type="RefSeq" id="NP_991238.1">
    <property type="nucleotide sequence ID" value="NM_205675.2"/>
</dbReference>
<dbReference type="SMR" id="Q6QU75"/>
<dbReference type="FunCoup" id="Q6QU75">
    <property type="interactions" value="18"/>
</dbReference>
<dbReference type="STRING" id="7955.ENSDARP00000093314"/>
<dbReference type="PaxDb" id="7955-ENSDARP00000093314"/>
<dbReference type="Ensembl" id="ENSDART00000102538">
    <property type="protein sequence ID" value="ENSDARP00000093314"/>
    <property type="gene ID" value="ENSDARG00000070069"/>
</dbReference>
<dbReference type="Ensembl" id="ENSDART00000190296">
    <property type="protein sequence ID" value="ENSDARP00000146864"/>
    <property type="gene ID" value="ENSDARG00000070069"/>
</dbReference>
<dbReference type="GeneID" id="402974"/>
<dbReference type="KEGG" id="dre:402974"/>
<dbReference type="AGR" id="ZFIN:ZDB-GENE-041229-4"/>
<dbReference type="CTD" id="5309"/>
<dbReference type="ZFIN" id="ZDB-GENE-041229-4">
    <property type="gene designation" value="pitx3"/>
</dbReference>
<dbReference type="eggNOG" id="KOG0486">
    <property type="taxonomic scope" value="Eukaryota"/>
</dbReference>
<dbReference type="HOGENOM" id="CLU_030301_0_0_1"/>
<dbReference type="InParanoid" id="Q6QU75"/>
<dbReference type="OMA" id="HESGCKG"/>
<dbReference type="OrthoDB" id="6159439at2759"/>
<dbReference type="PhylomeDB" id="Q6QU75"/>
<dbReference type="TreeFam" id="TF351940"/>
<dbReference type="PRO" id="PR:Q6QU75"/>
<dbReference type="Proteomes" id="UP000000437">
    <property type="component" value="Chromosome 13"/>
</dbReference>
<dbReference type="Bgee" id="ENSDARG00000070069">
    <property type="expression patterns" value="Expressed in adenohypophyseal placode and 45 other cell types or tissues"/>
</dbReference>
<dbReference type="ExpressionAtlas" id="Q6QU75">
    <property type="expression patterns" value="baseline"/>
</dbReference>
<dbReference type="GO" id="GO:0005634">
    <property type="term" value="C:nucleus"/>
    <property type="evidence" value="ECO:0000318"/>
    <property type="project" value="GO_Central"/>
</dbReference>
<dbReference type="GO" id="GO:0000981">
    <property type="term" value="F:DNA-binding transcription factor activity, RNA polymerase II-specific"/>
    <property type="evidence" value="ECO:0000318"/>
    <property type="project" value="GO_Central"/>
</dbReference>
<dbReference type="GO" id="GO:0000978">
    <property type="term" value="F:RNA polymerase II cis-regulatory region sequence-specific DNA binding"/>
    <property type="evidence" value="ECO:0000318"/>
    <property type="project" value="GO_Central"/>
</dbReference>
<dbReference type="GO" id="GO:0021984">
    <property type="term" value="P:adenohypophysis development"/>
    <property type="evidence" value="ECO:0000315"/>
    <property type="project" value="ZFIN"/>
</dbReference>
<dbReference type="GO" id="GO:0009653">
    <property type="term" value="P:anatomical structure morphogenesis"/>
    <property type="evidence" value="ECO:0000318"/>
    <property type="project" value="GO_Central"/>
</dbReference>
<dbReference type="GO" id="GO:0043010">
    <property type="term" value="P:camera-type eye development"/>
    <property type="evidence" value="ECO:0000315"/>
    <property type="project" value="ZFIN"/>
</dbReference>
<dbReference type="GO" id="GO:0035270">
    <property type="term" value="P:endocrine system development"/>
    <property type="evidence" value="ECO:0000315"/>
    <property type="project" value="ZFIN"/>
</dbReference>
<dbReference type="GO" id="GO:0002088">
    <property type="term" value="P:lens development in camera-type eye"/>
    <property type="evidence" value="ECO:0000315"/>
    <property type="project" value="ZFIN"/>
</dbReference>
<dbReference type="GO" id="GO:0070306">
    <property type="term" value="P:lens fiber cell differentiation"/>
    <property type="evidence" value="ECO:0000315"/>
    <property type="project" value="ZFIN"/>
</dbReference>
<dbReference type="GO" id="GO:0045893">
    <property type="term" value="P:positive regulation of DNA-templated transcription"/>
    <property type="evidence" value="ECO:0000315"/>
    <property type="project" value="ZFIN"/>
</dbReference>
<dbReference type="GO" id="GO:0006357">
    <property type="term" value="P:regulation of transcription by RNA polymerase II"/>
    <property type="evidence" value="ECO:0000318"/>
    <property type="project" value="GO_Central"/>
</dbReference>
<dbReference type="CDD" id="cd00086">
    <property type="entry name" value="homeodomain"/>
    <property type="match status" value="1"/>
</dbReference>
<dbReference type="FunFam" id="1.10.10.60:FF:000031">
    <property type="entry name" value="Homeobox protein"/>
    <property type="match status" value="1"/>
</dbReference>
<dbReference type="Gene3D" id="1.10.10.60">
    <property type="entry name" value="Homeodomain-like"/>
    <property type="match status" value="1"/>
</dbReference>
<dbReference type="InterPro" id="IPR001356">
    <property type="entry name" value="HD"/>
</dbReference>
<dbReference type="InterPro" id="IPR017970">
    <property type="entry name" value="Homeobox_CS"/>
</dbReference>
<dbReference type="InterPro" id="IPR016233">
    <property type="entry name" value="Homeobox_Pitx/unc30"/>
</dbReference>
<dbReference type="InterPro" id="IPR009057">
    <property type="entry name" value="Homeodomain-like_sf"/>
</dbReference>
<dbReference type="InterPro" id="IPR003654">
    <property type="entry name" value="OAR_dom"/>
</dbReference>
<dbReference type="PANTHER" id="PTHR45882:SF2">
    <property type="entry name" value="PITUITARY HOMEOBOX 3"/>
    <property type="match status" value="1"/>
</dbReference>
<dbReference type="PANTHER" id="PTHR45882">
    <property type="entry name" value="PITUITARY HOMEOBOX HOMOLOG PTX1"/>
    <property type="match status" value="1"/>
</dbReference>
<dbReference type="Pfam" id="PF00046">
    <property type="entry name" value="Homeodomain"/>
    <property type="match status" value="1"/>
</dbReference>
<dbReference type="Pfam" id="PF03826">
    <property type="entry name" value="OAR"/>
    <property type="match status" value="1"/>
</dbReference>
<dbReference type="PIRSF" id="PIRSF000563">
    <property type="entry name" value="Homeobox_protein_Pitx/Unc30"/>
    <property type="match status" value="1"/>
</dbReference>
<dbReference type="SMART" id="SM00389">
    <property type="entry name" value="HOX"/>
    <property type="match status" value="1"/>
</dbReference>
<dbReference type="SUPFAM" id="SSF46689">
    <property type="entry name" value="Homeodomain-like"/>
    <property type="match status" value="1"/>
</dbReference>
<dbReference type="PROSITE" id="PS00027">
    <property type="entry name" value="HOMEOBOX_1"/>
    <property type="match status" value="1"/>
</dbReference>
<dbReference type="PROSITE" id="PS50071">
    <property type="entry name" value="HOMEOBOX_2"/>
    <property type="match status" value="1"/>
</dbReference>
<dbReference type="PROSITE" id="PS50803">
    <property type="entry name" value="OAR"/>
    <property type="match status" value="1"/>
</dbReference>
<gene>
    <name evidence="15" type="primary">pitx3</name>
    <name type="ORF">si:dkey-196H17.1</name>
</gene>
<proteinExistence type="evidence at transcript level"/>
<sequence>MDFNLLTDSEARSPALSLSDSGTPQHDPGCKGQDNSDTEKSHQNHTDESNPEDGSLKKKQRRQRTHFTSQQLQELEATFQRNRYPDMSTREEIAVWTNLTEARVRVWFKNRRAKWRKRERNQQAELCKNGFGAQFNGLMQPYDDMYSGYSYNNWATKSLASSPLSAKSFPFFNSMNVSPLSSQPMFSPPSSIPSMNMASSMVPSAVAGVPGSGLNNLGNLNNLNSPTLNSAAVSAAACPYATTAGPYMYRDTCNSSLASLRLKAKQHANFAYPAVQNPVSNLSPCQYAVDRPV</sequence>
<keyword id="KW-0010">Activator</keyword>
<keyword id="KW-0217">Developmental protein</keyword>
<keyword id="KW-0238">DNA-binding</keyword>
<keyword id="KW-0371">Homeobox</keyword>
<keyword id="KW-0539">Nucleus</keyword>
<keyword id="KW-1185">Reference proteome</keyword>
<keyword id="KW-0804">Transcription</keyword>
<keyword id="KW-0805">Transcription regulation</keyword>
<reference evidence="10 12" key="1">
    <citation type="journal article" date="2005" name="Development">
        <title>pitx3 defines an equivalence domain for lens and anterior pituitary placode.</title>
        <authorList>
            <person name="Dutta S."/>
            <person name="Dietrich J.E."/>
            <person name="Aspock G."/>
            <person name="Burdine R.D."/>
            <person name="Schier A."/>
            <person name="Westerfield M."/>
            <person name="Varga Z.M."/>
        </authorList>
    </citation>
    <scope>NUCLEOTIDE SEQUENCE [MRNA]</scope>
    <scope>FUNCTION</scope>
    <scope>TISSUE SPECIFICITY</scope>
    <scope>DEVELOPMENTAL STAGE</scope>
    <source>
        <tissue evidence="7">Embryo</tissue>
    </source>
</reference>
<reference evidence="10 13" key="2">
    <citation type="journal article" date="2005" name="Mech. Dev.">
        <title>Zebrafish pitx3 is necessary for normal lens and retinal development.</title>
        <authorList>
            <person name="Shi X."/>
            <person name="Bosenko D.V."/>
            <person name="Zinkevich N.S."/>
            <person name="Foley S."/>
            <person name="Hyde D.R."/>
            <person name="Semina E.V."/>
            <person name="Vihtelic T.S."/>
        </authorList>
    </citation>
    <scope>NUCLEOTIDE SEQUENCE [GENOMIC DNA / MRNA]</scope>
    <scope>FUNCTION</scope>
    <scope>TISSUE SPECIFICITY</scope>
    <scope>DEVELOPMENTAL STAGE</scope>
    <source>
        <tissue evidence="8">Eye</tissue>
    </source>
</reference>
<reference key="3">
    <citation type="journal article" date="2013" name="Nature">
        <title>The zebrafish reference genome sequence and its relationship to the human genome.</title>
        <authorList>
            <person name="Howe K."/>
            <person name="Clark M.D."/>
            <person name="Torroja C.F."/>
            <person name="Torrance J."/>
            <person name="Berthelot C."/>
            <person name="Muffato M."/>
            <person name="Collins J.E."/>
            <person name="Humphray S."/>
            <person name="McLaren K."/>
            <person name="Matthews L."/>
            <person name="McLaren S."/>
            <person name="Sealy I."/>
            <person name="Caccamo M."/>
            <person name="Churcher C."/>
            <person name="Scott C."/>
            <person name="Barrett J.C."/>
            <person name="Koch R."/>
            <person name="Rauch G.J."/>
            <person name="White S."/>
            <person name="Chow W."/>
            <person name="Kilian B."/>
            <person name="Quintais L.T."/>
            <person name="Guerra-Assuncao J.A."/>
            <person name="Zhou Y."/>
            <person name="Gu Y."/>
            <person name="Yen J."/>
            <person name="Vogel J.H."/>
            <person name="Eyre T."/>
            <person name="Redmond S."/>
            <person name="Banerjee R."/>
            <person name="Chi J."/>
            <person name="Fu B."/>
            <person name="Langley E."/>
            <person name="Maguire S.F."/>
            <person name="Laird G.K."/>
            <person name="Lloyd D."/>
            <person name="Kenyon E."/>
            <person name="Donaldson S."/>
            <person name="Sehra H."/>
            <person name="Almeida-King J."/>
            <person name="Loveland J."/>
            <person name="Trevanion S."/>
            <person name="Jones M."/>
            <person name="Quail M."/>
            <person name="Willey D."/>
            <person name="Hunt A."/>
            <person name="Burton J."/>
            <person name="Sims S."/>
            <person name="McLay K."/>
            <person name="Plumb B."/>
            <person name="Davis J."/>
            <person name="Clee C."/>
            <person name="Oliver K."/>
            <person name="Clark R."/>
            <person name="Riddle C."/>
            <person name="Elliot D."/>
            <person name="Threadgold G."/>
            <person name="Harden G."/>
            <person name="Ware D."/>
            <person name="Begum S."/>
            <person name="Mortimore B."/>
            <person name="Kerry G."/>
            <person name="Heath P."/>
            <person name="Phillimore B."/>
            <person name="Tracey A."/>
            <person name="Corby N."/>
            <person name="Dunn M."/>
            <person name="Johnson C."/>
            <person name="Wood J."/>
            <person name="Clark S."/>
            <person name="Pelan S."/>
            <person name="Griffiths G."/>
            <person name="Smith M."/>
            <person name="Glithero R."/>
            <person name="Howden P."/>
            <person name="Barker N."/>
            <person name="Lloyd C."/>
            <person name="Stevens C."/>
            <person name="Harley J."/>
            <person name="Holt K."/>
            <person name="Panagiotidis G."/>
            <person name="Lovell J."/>
            <person name="Beasley H."/>
            <person name="Henderson C."/>
            <person name="Gordon D."/>
            <person name="Auger K."/>
            <person name="Wright D."/>
            <person name="Collins J."/>
            <person name="Raisen C."/>
            <person name="Dyer L."/>
            <person name="Leung K."/>
            <person name="Robertson L."/>
            <person name="Ambridge K."/>
            <person name="Leongamornlert D."/>
            <person name="McGuire S."/>
            <person name="Gilderthorp R."/>
            <person name="Griffiths C."/>
            <person name="Manthravadi D."/>
            <person name="Nichol S."/>
            <person name="Barker G."/>
            <person name="Whitehead S."/>
            <person name="Kay M."/>
            <person name="Brown J."/>
            <person name="Murnane C."/>
            <person name="Gray E."/>
            <person name="Humphries M."/>
            <person name="Sycamore N."/>
            <person name="Barker D."/>
            <person name="Saunders D."/>
            <person name="Wallis J."/>
            <person name="Babbage A."/>
            <person name="Hammond S."/>
            <person name="Mashreghi-Mohammadi M."/>
            <person name="Barr L."/>
            <person name="Martin S."/>
            <person name="Wray P."/>
            <person name="Ellington A."/>
            <person name="Matthews N."/>
            <person name="Ellwood M."/>
            <person name="Woodmansey R."/>
            <person name="Clark G."/>
            <person name="Cooper J."/>
            <person name="Tromans A."/>
            <person name="Grafham D."/>
            <person name="Skuce C."/>
            <person name="Pandian R."/>
            <person name="Andrews R."/>
            <person name="Harrison E."/>
            <person name="Kimberley A."/>
            <person name="Garnett J."/>
            <person name="Fosker N."/>
            <person name="Hall R."/>
            <person name="Garner P."/>
            <person name="Kelly D."/>
            <person name="Bird C."/>
            <person name="Palmer S."/>
            <person name="Gehring I."/>
            <person name="Berger A."/>
            <person name="Dooley C.M."/>
            <person name="Ersan-Urun Z."/>
            <person name="Eser C."/>
            <person name="Geiger H."/>
            <person name="Geisler M."/>
            <person name="Karotki L."/>
            <person name="Kirn A."/>
            <person name="Konantz J."/>
            <person name="Konantz M."/>
            <person name="Oberlander M."/>
            <person name="Rudolph-Geiger S."/>
            <person name="Teucke M."/>
            <person name="Lanz C."/>
            <person name="Raddatz G."/>
            <person name="Osoegawa K."/>
            <person name="Zhu B."/>
            <person name="Rapp A."/>
            <person name="Widaa S."/>
            <person name="Langford C."/>
            <person name="Yang F."/>
            <person name="Schuster S.C."/>
            <person name="Carter N.P."/>
            <person name="Harrow J."/>
            <person name="Ning Z."/>
            <person name="Herrero J."/>
            <person name="Searle S.M."/>
            <person name="Enright A."/>
            <person name="Geisler R."/>
            <person name="Plasterk R.H."/>
            <person name="Lee C."/>
            <person name="Westerfield M."/>
            <person name="de Jong P.J."/>
            <person name="Zon L.I."/>
            <person name="Postlethwait J.H."/>
            <person name="Nusslein-Volhard C."/>
            <person name="Hubbard T.J."/>
            <person name="Roest Crollius H."/>
            <person name="Rogers J."/>
            <person name="Stemple D.L."/>
        </authorList>
    </citation>
    <scope>NUCLEOTIDE SEQUENCE [LARGE SCALE GENOMIC DNA]</scope>
    <source>
        <strain>Tuebingen</strain>
    </source>
</reference>
<reference evidence="14" key="4">
    <citation type="submission" date="2005-05" db="EMBL/GenBank/DDBJ databases">
        <authorList>
            <consortium name="NIH - Zebrafish Gene Collection (ZGC) project"/>
        </authorList>
    </citation>
    <scope>NUCLEOTIDE SEQUENCE [LARGE SCALE MRNA]</scope>
    <source>
        <tissue evidence="11">Eye</tissue>
    </source>
</reference>
<reference evidence="10" key="5">
    <citation type="journal article" date="2007" name="BMC Dev. Biol.">
        <title>Expression and function of nr4a2, lmx1b, and pitx3 in zebrafish dopaminergic and noradrenergic neuronal development.</title>
        <authorList>
            <person name="Filippi A."/>
            <person name="Durr K."/>
            <person name="Ryu S."/>
            <person name="Willaredt M."/>
            <person name="Holzschuh J."/>
            <person name="Driever W."/>
        </authorList>
    </citation>
    <scope>FUNCTION</scope>
    <scope>TISSUE SPECIFICITY</scope>
    <scope>DEVELOPMENTAL STAGE</scope>
    <source>
        <tissue evidence="9">Embryo</tissue>
    </source>
</reference>
<name>PITX3_DANRE</name>
<evidence type="ECO:0000250" key="1"/>
<evidence type="ECO:0000250" key="2">
    <source>
        <dbReference type="UniProtKB" id="O35160"/>
    </source>
</evidence>
<evidence type="ECO:0000255" key="3"/>
<evidence type="ECO:0000255" key="4">
    <source>
        <dbReference type="PROSITE-ProRule" id="PRU00108"/>
    </source>
</evidence>
<evidence type="ECO:0000255" key="5">
    <source>
        <dbReference type="PROSITE-ProRule" id="PRU00138"/>
    </source>
</evidence>
<evidence type="ECO:0000256" key="6">
    <source>
        <dbReference type="SAM" id="MobiDB-lite"/>
    </source>
</evidence>
<evidence type="ECO:0000269" key="7">
    <source>
    </source>
</evidence>
<evidence type="ECO:0000269" key="8">
    <source>
    </source>
</evidence>
<evidence type="ECO:0000269" key="9">
    <source>
    </source>
</evidence>
<evidence type="ECO:0000305" key="10"/>
<evidence type="ECO:0000312" key="11">
    <source>
        <dbReference type="EMBL" id="AAH94961.1"/>
    </source>
</evidence>
<evidence type="ECO:0000312" key="12">
    <source>
        <dbReference type="EMBL" id="AAR98874.1"/>
    </source>
</evidence>
<evidence type="ECO:0000312" key="13">
    <source>
        <dbReference type="EMBL" id="AAT72155.1"/>
    </source>
</evidence>
<evidence type="ECO:0000312" key="14">
    <source>
        <dbReference type="EMBL" id="CAX12174.1"/>
    </source>
</evidence>
<evidence type="ECO:0000312" key="15">
    <source>
        <dbReference type="ZFIN" id="ZDB-GENE-041229-4"/>
    </source>
</evidence>
<accession>Q6QU75</accession>
<accession>Q6DUF5</accession>